<name>CRN_DROME</name>
<gene>
    <name type="primary">crn</name>
    <name type="ORF">CG3193</name>
</gene>
<keyword id="KW-0217">Developmental protein</keyword>
<keyword id="KW-0221">Differentiation</keyword>
<keyword id="KW-0507">mRNA processing</keyword>
<keyword id="KW-0508">mRNA splicing</keyword>
<keyword id="KW-0524">Neurogenesis</keyword>
<keyword id="KW-0539">Nucleus</keyword>
<keyword id="KW-1185">Reference proteome</keyword>
<keyword id="KW-0677">Repeat</keyword>
<evidence type="ECO:0000255" key="1"/>
<evidence type="ECO:0000256" key="2">
    <source>
        <dbReference type="SAM" id="MobiDB-lite"/>
    </source>
</evidence>
<evidence type="ECO:0000269" key="3">
    <source>
    </source>
</evidence>
<evidence type="ECO:0000269" key="4">
    <source>
    </source>
</evidence>
<evidence type="ECO:0000269" key="5">
    <source>
    </source>
</evidence>
<evidence type="ECO:0000305" key="6"/>
<protein>
    <recommendedName>
        <fullName>Protein crooked neck</fullName>
    </recommendedName>
</protein>
<sequence>MERPQKMPKVAKVKNKAPAEVQITAEQLLREAKERDLEILPPPPKQKISDPAELADYQQRKRKTFEDNLRKNRMVVSHWIKYAQWEEQQQEIQRARSIWERALDNEHRNVTLWLKYAEMEMKNKQVNHARNLWDRAVTIMPRVNQFWYKYTYMEEMLENVAGARQVFERWMEWQPEEQAWQTYVNFELRYKEIDRAREIYERFVYVHPDVKNWIKFARFEESHGFIHGSRRVFERAVEFFGDDYIEERLFIAFARFEEGQKEHDRARIIYKYALDHLPKDRTQELFKAYTKHEKKYGDRAGIEDVIVSKRKYQYEQEVAANPTNYDAWFDYLRLIEAEGDRDQIRETYERAISNVPPANEKNFWRRYIYLWINYALYEELEAEDAERTRQIYKTCLELIPHKQFTFSKLWLLYAQFEIRCKELQRARKALGLAIGMCPRDKLFRGYIDLEIQLREFERCRMLYEKFLEFGPENCVTWMKFAELENLLGDTDRARAIFELAVQQPRLDMPELLWKAYIDFEVALGETELARQLYERLLERTQHVKVWMSFAKFEMGLSHGDSGPDAELNVQLARRIYERANEMLRQLGDKESRVLLLEAWRDFERDASDSQEMQKVMDKMPRRIKKRQKIVSDNGVEEGWEEVFDYIFPEDEMARPNLKLLAAAKMWKTQKDNTVDDPPATAIASEPEPAADAAPADTTDSGD</sequence>
<feature type="chain" id="PRO_0000205718" description="Protein crooked neck">
    <location>
        <begin position="1"/>
        <end position="702"/>
    </location>
</feature>
<feature type="repeat" description="HAT 1">
    <location>
        <begin position="56"/>
        <end position="88"/>
    </location>
</feature>
<feature type="repeat" description="HAT 2">
    <location>
        <begin position="90"/>
        <end position="122"/>
    </location>
</feature>
<feature type="repeat" description="HAT 3">
    <location>
        <begin position="124"/>
        <end position="156"/>
    </location>
</feature>
<feature type="repeat" description="HAT 4">
    <location>
        <begin position="158"/>
        <end position="189"/>
    </location>
</feature>
<feature type="repeat" description="HAT 5">
    <location>
        <begin position="191"/>
        <end position="222"/>
    </location>
</feature>
<feature type="repeat" description="HAT 6">
    <location>
        <begin position="224"/>
        <end position="259"/>
    </location>
</feature>
<feature type="repeat" description="HAT 7">
    <location>
        <begin position="261"/>
        <end position="295"/>
    </location>
</feature>
<feature type="repeat" description="HAT 8">
    <location>
        <begin position="305"/>
        <end position="337"/>
    </location>
</feature>
<feature type="repeat" description="HAT 9">
    <location>
        <begin position="339"/>
        <end position="373"/>
    </location>
</feature>
<feature type="repeat" description="HAT 10">
    <location>
        <begin position="383"/>
        <end position="419"/>
    </location>
</feature>
<feature type="repeat" description="HAT 11">
    <location>
        <begin position="454"/>
        <end position="486"/>
    </location>
</feature>
<feature type="repeat" description="HAT 12">
    <location>
        <begin position="488"/>
        <end position="522"/>
    </location>
</feature>
<feature type="repeat" description="HAT 13">
    <location>
        <begin position="524"/>
        <end position="555"/>
    </location>
</feature>
<feature type="region of interest" description="Disordered" evidence="2">
    <location>
        <begin position="670"/>
        <end position="702"/>
    </location>
</feature>
<feature type="short sequence motif" description="Nuclear localization signal" evidence="1">
    <location>
        <begin position="620"/>
        <end position="628"/>
    </location>
</feature>
<feature type="compositionally biased region" description="Low complexity" evidence="2">
    <location>
        <begin position="683"/>
        <end position="702"/>
    </location>
</feature>
<feature type="sequence conflict" description="In Ref. 1; CAA41263." evidence="6" ref="1">
    <original>R</original>
    <variation>P</variation>
    <location>
        <position position="94"/>
    </location>
</feature>
<dbReference type="EMBL" id="X58374">
    <property type="protein sequence ID" value="CAA41263.1"/>
    <property type="molecule type" value="mRNA"/>
</dbReference>
<dbReference type="EMBL" id="AE014298">
    <property type="protein sequence ID" value="AAF45760.1"/>
    <property type="molecule type" value="Genomic_DNA"/>
</dbReference>
<dbReference type="EMBL" id="AL009195">
    <property type="protein sequence ID" value="CAA15705.1"/>
    <property type="molecule type" value="Genomic_DNA"/>
</dbReference>
<dbReference type="EMBL" id="AY051666">
    <property type="protein sequence ID" value="AAK93090.1"/>
    <property type="molecule type" value="mRNA"/>
</dbReference>
<dbReference type="PIR" id="T13427">
    <property type="entry name" value="T13427"/>
</dbReference>
<dbReference type="RefSeq" id="NP_477118.1">
    <property type="nucleotide sequence ID" value="NM_057770.5"/>
</dbReference>
<dbReference type="SMR" id="P17886"/>
<dbReference type="BioGRID" id="57745">
    <property type="interactions" value="69"/>
</dbReference>
<dbReference type="DIP" id="DIP-17429N"/>
<dbReference type="FunCoup" id="P17886">
    <property type="interactions" value="2182"/>
</dbReference>
<dbReference type="IntAct" id="P17886">
    <property type="interactions" value="48"/>
</dbReference>
<dbReference type="MINT" id="P17886"/>
<dbReference type="STRING" id="7227.FBpp0070402"/>
<dbReference type="PaxDb" id="7227-FBpp0070402"/>
<dbReference type="DNASU" id="31208"/>
<dbReference type="EnsemblMetazoa" id="FBtr0070418">
    <property type="protein sequence ID" value="FBpp0070402"/>
    <property type="gene ID" value="FBgn0000377"/>
</dbReference>
<dbReference type="GeneID" id="31208"/>
<dbReference type="KEGG" id="dme:Dmel_CG3193"/>
<dbReference type="AGR" id="FB:FBgn0000377"/>
<dbReference type="CTD" id="12935"/>
<dbReference type="FlyBase" id="FBgn0000377">
    <property type="gene designation" value="crn"/>
</dbReference>
<dbReference type="VEuPathDB" id="VectorBase:FBgn0000377"/>
<dbReference type="eggNOG" id="KOG1915">
    <property type="taxonomic scope" value="Eukaryota"/>
</dbReference>
<dbReference type="GeneTree" id="ENSGT00550000074931"/>
<dbReference type="HOGENOM" id="CLU_011554_1_0_1"/>
<dbReference type="InParanoid" id="P17886"/>
<dbReference type="OMA" id="HIKVWIS"/>
<dbReference type="OrthoDB" id="541719at2759"/>
<dbReference type="PhylomeDB" id="P17886"/>
<dbReference type="Reactome" id="R-DME-72163">
    <property type="pathway name" value="mRNA Splicing - Major Pathway"/>
</dbReference>
<dbReference type="SignaLink" id="P17886"/>
<dbReference type="BioGRID-ORCS" id="31208">
    <property type="hits" value="0 hits in 1 CRISPR screen"/>
</dbReference>
<dbReference type="GenomeRNAi" id="31208"/>
<dbReference type="PRO" id="PR:P17886"/>
<dbReference type="Proteomes" id="UP000000803">
    <property type="component" value="Chromosome X"/>
</dbReference>
<dbReference type="Bgee" id="FBgn0000377">
    <property type="expression patterns" value="Expressed in eye disc (Drosophila) and 53 other cell types or tissues"/>
</dbReference>
<dbReference type="GO" id="GO:0071013">
    <property type="term" value="C:catalytic step 2 spliceosome"/>
    <property type="evidence" value="ECO:0007005"/>
    <property type="project" value="FlyBase"/>
</dbReference>
<dbReference type="GO" id="GO:0005829">
    <property type="term" value="C:cytosol"/>
    <property type="evidence" value="ECO:0000314"/>
    <property type="project" value="FlyBase"/>
</dbReference>
<dbReference type="GO" id="GO:0016607">
    <property type="term" value="C:nuclear speck"/>
    <property type="evidence" value="ECO:0000314"/>
    <property type="project" value="FlyBase"/>
</dbReference>
<dbReference type="GO" id="GO:0005634">
    <property type="term" value="C:nucleus"/>
    <property type="evidence" value="ECO:0000314"/>
    <property type="project" value="FlyBase"/>
</dbReference>
<dbReference type="GO" id="GO:0071014">
    <property type="term" value="C:post-mRNA release spliceosomal complex"/>
    <property type="evidence" value="ECO:0000318"/>
    <property type="project" value="GO_Central"/>
</dbReference>
<dbReference type="GO" id="GO:0071011">
    <property type="term" value="C:precatalytic spliceosome"/>
    <property type="evidence" value="ECO:0007005"/>
    <property type="project" value="FlyBase"/>
</dbReference>
<dbReference type="GO" id="GO:0000974">
    <property type="term" value="C:Prp19 complex"/>
    <property type="evidence" value="ECO:0000318"/>
    <property type="project" value="GO_Central"/>
</dbReference>
<dbReference type="GO" id="GO:0071007">
    <property type="term" value="C:U2-type catalytic step 2 spliceosome"/>
    <property type="evidence" value="ECO:0000318"/>
    <property type="project" value="GO_Central"/>
</dbReference>
<dbReference type="GO" id="GO:0003723">
    <property type="term" value="F:RNA binding"/>
    <property type="evidence" value="ECO:0000250"/>
    <property type="project" value="FlyBase"/>
</dbReference>
<dbReference type="GO" id="GO:0008366">
    <property type="term" value="P:axon ensheathment"/>
    <property type="evidence" value="ECO:0000315"/>
    <property type="project" value="FlyBase"/>
</dbReference>
<dbReference type="GO" id="GO:0008347">
    <property type="term" value="P:glial cell migration"/>
    <property type="evidence" value="ECO:0000315"/>
    <property type="project" value="FlyBase"/>
</dbReference>
<dbReference type="GO" id="GO:0007443">
    <property type="term" value="P:Malpighian tubule morphogenesis"/>
    <property type="evidence" value="ECO:0000315"/>
    <property type="project" value="FlyBase"/>
</dbReference>
<dbReference type="GO" id="GO:0000398">
    <property type="term" value="P:mRNA splicing, via spliceosome"/>
    <property type="evidence" value="ECO:0000318"/>
    <property type="project" value="GO_Central"/>
</dbReference>
<dbReference type="GO" id="GO:0007438">
    <property type="term" value="P:oenocyte development"/>
    <property type="evidence" value="ECO:0000315"/>
    <property type="project" value="FlyBase"/>
</dbReference>
<dbReference type="GO" id="GO:0000381">
    <property type="term" value="P:regulation of alternative mRNA splicing, via spliceosome"/>
    <property type="evidence" value="ECO:0000315"/>
    <property type="project" value="FlyBase"/>
</dbReference>
<dbReference type="GO" id="GO:0000245">
    <property type="term" value="P:spliceosomal complex assembly"/>
    <property type="evidence" value="ECO:0000318"/>
    <property type="project" value="GO_Central"/>
</dbReference>
<dbReference type="FunFam" id="1.25.40.10:FF:001149">
    <property type="entry name" value="Blast:Protein crooked neck"/>
    <property type="match status" value="1"/>
</dbReference>
<dbReference type="FunFam" id="1.25.40.10:FF:000075">
    <property type="entry name" value="Crooked neck pre-mRNA-splicing factor 1"/>
    <property type="match status" value="1"/>
</dbReference>
<dbReference type="FunFam" id="1.25.40.10:FF:000269">
    <property type="entry name" value="Crooked neck pre-mRNA-splicing factor 1"/>
    <property type="match status" value="1"/>
</dbReference>
<dbReference type="Gene3D" id="1.25.40.10">
    <property type="entry name" value="Tetratricopeptide repeat domain"/>
    <property type="match status" value="3"/>
</dbReference>
<dbReference type="InterPro" id="IPR003107">
    <property type="entry name" value="HAT"/>
</dbReference>
<dbReference type="InterPro" id="IPR055430">
    <property type="entry name" value="HAT_Syf1_CNRKL1_C"/>
</dbReference>
<dbReference type="InterPro" id="IPR045075">
    <property type="entry name" value="Syf1-like"/>
</dbReference>
<dbReference type="InterPro" id="IPR011990">
    <property type="entry name" value="TPR-like_helical_dom_sf"/>
</dbReference>
<dbReference type="PANTHER" id="PTHR11246:SF3">
    <property type="entry name" value="CROOKED NECK-LIKE PROTEIN 1"/>
    <property type="match status" value="1"/>
</dbReference>
<dbReference type="PANTHER" id="PTHR11246">
    <property type="entry name" value="PRE-MRNA SPLICING FACTOR"/>
    <property type="match status" value="1"/>
</dbReference>
<dbReference type="Pfam" id="PF02184">
    <property type="entry name" value="HAT"/>
    <property type="match status" value="1"/>
</dbReference>
<dbReference type="Pfam" id="PF23241">
    <property type="entry name" value="HAT_PRP39_C"/>
    <property type="match status" value="1"/>
</dbReference>
<dbReference type="Pfam" id="PF23231">
    <property type="entry name" value="HAT_Syf1_CNRKL1_C"/>
    <property type="match status" value="1"/>
</dbReference>
<dbReference type="SMART" id="SM00386">
    <property type="entry name" value="HAT"/>
    <property type="match status" value="14"/>
</dbReference>
<dbReference type="SUPFAM" id="SSF48452">
    <property type="entry name" value="TPR-like"/>
    <property type="match status" value="1"/>
</dbReference>
<accession>P17886</accession>
<accession>O46071</accession>
<accession>Q24283</accession>
<reference key="1">
    <citation type="journal article" date="1991" name="Genes Dev.">
        <title>The crooked neck gene of Drosophila contains a motif found in a family of yeast cell cycle genes.</title>
        <authorList>
            <person name="Zhang K."/>
            <person name="Smouse D."/>
            <person name="Perrimon N."/>
        </authorList>
    </citation>
    <scope>NUCLEOTIDE SEQUENCE [MRNA]</scope>
    <scope>FUNCTION</scope>
    <scope>DISRUPTION PHENOTYPE</scope>
</reference>
<reference key="2">
    <citation type="journal article" date="2000" name="Science">
        <title>The genome sequence of Drosophila melanogaster.</title>
        <authorList>
            <person name="Adams M.D."/>
            <person name="Celniker S.E."/>
            <person name="Holt R.A."/>
            <person name="Evans C.A."/>
            <person name="Gocayne J.D."/>
            <person name="Amanatides P.G."/>
            <person name="Scherer S.E."/>
            <person name="Li P.W."/>
            <person name="Hoskins R.A."/>
            <person name="Galle R.F."/>
            <person name="George R.A."/>
            <person name="Lewis S.E."/>
            <person name="Richards S."/>
            <person name="Ashburner M."/>
            <person name="Henderson S.N."/>
            <person name="Sutton G.G."/>
            <person name="Wortman J.R."/>
            <person name="Yandell M.D."/>
            <person name="Zhang Q."/>
            <person name="Chen L.X."/>
            <person name="Brandon R.C."/>
            <person name="Rogers Y.-H.C."/>
            <person name="Blazej R.G."/>
            <person name="Champe M."/>
            <person name="Pfeiffer B.D."/>
            <person name="Wan K.H."/>
            <person name="Doyle C."/>
            <person name="Baxter E.G."/>
            <person name="Helt G."/>
            <person name="Nelson C.R."/>
            <person name="Miklos G.L.G."/>
            <person name="Abril J.F."/>
            <person name="Agbayani A."/>
            <person name="An H.-J."/>
            <person name="Andrews-Pfannkoch C."/>
            <person name="Baldwin D."/>
            <person name="Ballew R.M."/>
            <person name="Basu A."/>
            <person name="Baxendale J."/>
            <person name="Bayraktaroglu L."/>
            <person name="Beasley E.M."/>
            <person name="Beeson K.Y."/>
            <person name="Benos P.V."/>
            <person name="Berman B.P."/>
            <person name="Bhandari D."/>
            <person name="Bolshakov S."/>
            <person name="Borkova D."/>
            <person name="Botchan M.R."/>
            <person name="Bouck J."/>
            <person name="Brokstein P."/>
            <person name="Brottier P."/>
            <person name="Burtis K.C."/>
            <person name="Busam D.A."/>
            <person name="Butler H."/>
            <person name="Cadieu E."/>
            <person name="Center A."/>
            <person name="Chandra I."/>
            <person name="Cherry J.M."/>
            <person name="Cawley S."/>
            <person name="Dahlke C."/>
            <person name="Davenport L.B."/>
            <person name="Davies P."/>
            <person name="de Pablos B."/>
            <person name="Delcher A."/>
            <person name="Deng Z."/>
            <person name="Mays A.D."/>
            <person name="Dew I."/>
            <person name="Dietz S.M."/>
            <person name="Dodson K."/>
            <person name="Doup L.E."/>
            <person name="Downes M."/>
            <person name="Dugan-Rocha S."/>
            <person name="Dunkov B.C."/>
            <person name="Dunn P."/>
            <person name="Durbin K.J."/>
            <person name="Evangelista C.C."/>
            <person name="Ferraz C."/>
            <person name="Ferriera S."/>
            <person name="Fleischmann W."/>
            <person name="Fosler C."/>
            <person name="Gabrielian A.E."/>
            <person name="Garg N.S."/>
            <person name="Gelbart W.M."/>
            <person name="Glasser K."/>
            <person name="Glodek A."/>
            <person name="Gong F."/>
            <person name="Gorrell J.H."/>
            <person name="Gu Z."/>
            <person name="Guan P."/>
            <person name="Harris M."/>
            <person name="Harris N.L."/>
            <person name="Harvey D.A."/>
            <person name="Heiman T.J."/>
            <person name="Hernandez J.R."/>
            <person name="Houck J."/>
            <person name="Hostin D."/>
            <person name="Houston K.A."/>
            <person name="Howland T.J."/>
            <person name="Wei M.-H."/>
            <person name="Ibegwam C."/>
            <person name="Jalali M."/>
            <person name="Kalush F."/>
            <person name="Karpen G.H."/>
            <person name="Ke Z."/>
            <person name="Kennison J.A."/>
            <person name="Ketchum K.A."/>
            <person name="Kimmel B.E."/>
            <person name="Kodira C.D."/>
            <person name="Kraft C.L."/>
            <person name="Kravitz S."/>
            <person name="Kulp D."/>
            <person name="Lai Z."/>
            <person name="Lasko P."/>
            <person name="Lei Y."/>
            <person name="Levitsky A.A."/>
            <person name="Li J.H."/>
            <person name="Li Z."/>
            <person name="Liang Y."/>
            <person name="Lin X."/>
            <person name="Liu X."/>
            <person name="Mattei B."/>
            <person name="McIntosh T.C."/>
            <person name="McLeod M.P."/>
            <person name="McPherson D."/>
            <person name="Merkulov G."/>
            <person name="Milshina N.V."/>
            <person name="Mobarry C."/>
            <person name="Morris J."/>
            <person name="Moshrefi A."/>
            <person name="Mount S.M."/>
            <person name="Moy M."/>
            <person name="Murphy B."/>
            <person name="Murphy L."/>
            <person name="Muzny D.M."/>
            <person name="Nelson D.L."/>
            <person name="Nelson D.R."/>
            <person name="Nelson K.A."/>
            <person name="Nixon K."/>
            <person name="Nusskern D.R."/>
            <person name="Pacleb J.M."/>
            <person name="Palazzolo M."/>
            <person name="Pittman G.S."/>
            <person name="Pan S."/>
            <person name="Pollard J."/>
            <person name="Puri V."/>
            <person name="Reese M.G."/>
            <person name="Reinert K."/>
            <person name="Remington K."/>
            <person name="Saunders R.D.C."/>
            <person name="Scheeler F."/>
            <person name="Shen H."/>
            <person name="Shue B.C."/>
            <person name="Siden-Kiamos I."/>
            <person name="Simpson M."/>
            <person name="Skupski M.P."/>
            <person name="Smith T.J."/>
            <person name="Spier E."/>
            <person name="Spradling A.C."/>
            <person name="Stapleton M."/>
            <person name="Strong R."/>
            <person name="Sun E."/>
            <person name="Svirskas R."/>
            <person name="Tector C."/>
            <person name="Turner R."/>
            <person name="Venter E."/>
            <person name="Wang A.H."/>
            <person name="Wang X."/>
            <person name="Wang Z.-Y."/>
            <person name="Wassarman D.A."/>
            <person name="Weinstock G.M."/>
            <person name="Weissenbach J."/>
            <person name="Williams S.M."/>
            <person name="Woodage T."/>
            <person name="Worley K.C."/>
            <person name="Wu D."/>
            <person name="Yang S."/>
            <person name="Yao Q.A."/>
            <person name="Ye J."/>
            <person name="Yeh R.-F."/>
            <person name="Zaveri J.S."/>
            <person name="Zhan M."/>
            <person name="Zhang G."/>
            <person name="Zhao Q."/>
            <person name="Zheng L."/>
            <person name="Zheng X.H."/>
            <person name="Zhong F.N."/>
            <person name="Zhong W."/>
            <person name="Zhou X."/>
            <person name="Zhu S.C."/>
            <person name="Zhu X."/>
            <person name="Smith H.O."/>
            <person name="Gibbs R.A."/>
            <person name="Myers E.W."/>
            <person name="Rubin G.M."/>
            <person name="Venter J.C."/>
        </authorList>
    </citation>
    <scope>NUCLEOTIDE SEQUENCE [LARGE SCALE GENOMIC DNA]</scope>
    <source>
        <strain>Berkeley</strain>
    </source>
</reference>
<reference key="3">
    <citation type="journal article" date="2002" name="Genome Biol.">
        <title>Annotation of the Drosophila melanogaster euchromatic genome: a systematic review.</title>
        <authorList>
            <person name="Misra S."/>
            <person name="Crosby M.A."/>
            <person name="Mungall C.J."/>
            <person name="Matthews B.B."/>
            <person name="Campbell K.S."/>
            <person name="Hradecky P."/>
            <person name="Huang Y."/>
            <person name="Kaminker J.S."/>
            <person name="Millburn G.H."/>
            <person name="Prochnik S.E."/>
            <person name="Smith C.D."/>
            <person name="Tupy J.L."/>
            <person name="Whitfield E.J."/>
            <person name="Bayraktaroglu L."/>
            <person name="Berman B.P."/>
            <person name="Bettencourt B.R."/>
            <person name="Celniker S.E."/>
            <person name="de Grey A.D.N.J."/>
            <person name="Drysdale R.A."/>
            <person name="Harris N.L."/>
            <person name="Richter J."/>
            <person name="Russo S."/>
            <person name="Schroeder A.J."/>
            <person name="Shu S.Q."/>
            <person name="Stapleton M."/>
            <person name="Yamada C."/>
            <person name="Ashburner M."/>
            <person name="Gelbart W.M."/>
            <person name="Rubin G.M."/>
            <person name="Lewis S.E."/>
        </authorList>
    </citation>
    <scope>GENOME REANNOTATION</scope>
    <source>
        <strain>Berkeley</strain>
    </source>
</reference>
<reference key="4">
    <citation type="journal article" date="2000" name="Science">
        <title>From sequence to chromosome: the tip of the X chromosome of D. melanogaster.</title>
        <authorList>
            <person name="Benos P.V."/>
            <person name="Gatt M.K."/>
            <person name="Ashburner M."/>
            <person name="Murphy L."/>
            <person name="Harris D."/>
            <person name="Barrell B.G."/>
            <person name="Ferraz C."/>
            <person name="Vidal S."/>
            <person name="Brun C."/>
            <person name="Demailles J."/>
            <person name="Cadieu E."/>
            <person name="Dreano S."/>
            <person name="Gloux S."/>
            <person name="Lelaure V."/>
            <person name="Mottier S."/>
            <person name="Galibert F."/>
            <person name="Borkova D."/>
            <person name="Minana B."/>
            <person name="Kafatos F.C."/>
            <person name="Louis C."/>
            <person name="Siden-Kiamos I."/>
            <person name="Bolshakov S."/>
            <person name="Papagiannakis G."/>
            <person name="Spanos L."/>
            <person name="Cox S."/>
            <person name="Madueno E."/>
            <person name="de Pablos B."/>
            <person name="Modolell J."/>
            <person name="Peter A."/>
            <person name="Schoettler P."/>
            <person name="Werner M."/>
            <person name="Mourkioti F."/>
            <person name="Beinert N."/>
            <person name="Dowe G."/>
            <person name="Schaefer U."/>
            <person name="Jaeckle H."/>
            <person name="Bucheton A."/>
            <person name="Callister D.M."/>
            <person name="Campbell L.A."/>
            <person name="Darlamitsou A."/>
            <person name="Henderson N.S."/>
            <person name="McMillan P.J."/>
            <person name="Salles C."/>
            <person name="Tait E.A."/>
            <person name="Valenti P."/>
            <person name="Saunders R.D.C."/>
            <person name="Glover D.M."/>
        </authorList>
    </citation>
    <scope>NUCLEOTIDE SEQUENCE [LARGE SCALE GENOMIC DNA]</scope>
    <source>
        <strain>Oregon-R</strain>
    </source>
</reference>
<reference key="5">
    <citation type="journal article" date="2002" name="Genome Biol.">
        <title>A Drosophila full-length cDNA resource.</title>
        <authorList>
            <person name="Stapleton M."/>
            <person name="Carlson J.W."/>
            <person name="Brokstein P."/>
            <person name="Yu C."/>
            <person name="Champe M."/>
            <person name="George R.A."/>
            <person name="Guarin H."/>
            <person name="Kronmiller B."/>
            <person name="Pacleb J.M."/>
            <person name="Park S."/>
            <person name="Wan K.H."/>
            <person name="Rubin G.M."/>
            <person name="Celniker S.E."/>
        </authorList>
    </citation>
    <scope>NUCLEOTIDE SEQUENCE [LARGE SCALE MRNA]</scope>
    <source>
        <strain>Berkeley</strain>
        <tissue>Embryo</tissue>
    </source>
</reference>
<reference key="6">
    <citation type="journal article" date="1999" name="Dev. Genes Evol.">
        <title>Mutations that alter the morphology of the malpighian tubules in Drosophila.</title>
        <authorList>
            <person name="Jack J."/>
            <person name="Myette G."/>
        </authorList>
    </citation>
    <scope>FUNCTION</scope>
    <scope>DISRUPTION PHENOTYPE</scope>
</reference>
<reference key="7">
    <citation type="journal article" date="2002" name="Biochem. Biophys. Res. Commun.">
        <title>Drosophila crooked-neck protein co-fractionates in a multiprotein complex with splicing factors.</title>
        <authorList>
            <person name="Raisin-Tani S."/>
            <person name="Leopold P."/>
        </authorList>
    </citation>
    <scope>FUNCTION</scope>
</reference>
<organism>
    <name type="scientific">Drosophila melanogaster</name>
    <name type="common">Fruit fly</name>
    <dbReference type="NCBI Taxonomy" id="7227"/>
    <lineage>
        <taxon>Eukaryota</taxon>
        <taxon>Metazoa</taxon>
        <taxon>Ecdysozoa</taxon>
        <taxon>Arthropoda</taxon>
        <taxon>Hexapoda</taxon>
        <taxon>Insecta</taxon>
        <taxon>Pterygota</taxon>
        <taxon>Neoptera</taxon>
        <taxon>Endopterygota</taxon>
        <taxon>Diptera</taxon>
        <taxon>Brachycera</taxon>
        <taxon>Muscomorpha</taxon>
        <taxon>Ephydroidea</taxon>
        <taxon>Drosophilidae</taxon>
        <taxon>Drosophila</taxon>
        <taxon>Sophophora</taxon>
    </lineage>
</organism>
<proteinExistence type="evidence at transcript level"/>
<comment type="function">
    <text evidence="3 4 5">May be involved in pre-mRNA splicing process (PubMed:12163015, PubMed:2044955). Involved in embryonic neurogenesis and cell rearrangement during Malpighian tubule morphogenesis (PubMed:10502111, PubMed:2044955).</text>
</comment>
<comment type="subunit">
    <text>Colocalizes with a complex containing snRNP proteins.</text>
</comment>
<comment type="subcellular location">
    <subcellularLocation>
        <location>Nucleus speckle</location>
    </subcellularLocation>
    <text>Concentrated in nuclear speckles.</text>
</comment>
<comment type="tissue specificity">
    <text>Transcribed in all cells during embryonic development.</text>
</comment>
<comment type="developmental stage">
    <text>Is expressed throughout embryonic, larval, pupal and adult stages at relatively constant levels.</text>
</comment>
<comment type="disruption phenotype">
    <text evidence="3 5">Causes defects in the proliferation of brain neuroblasts and results in the absence of identified neuronal lineages in the central and peripheral nervous systems (PubMed:2044955). During embryonic Malpighian morphogenesis, most of the cells of the Malpighian tubules fail to undergo rearrangement to form tubes with a two cell circumference. Only cells at the distal end of the tubule rearrange (PubMed:10502111).</text>
</comment>
<comment type="similarity">
    <text evidence="6">Belongs to the crooked-neck family.</text>
</comment>